<gene>
    <name evidence="1" type="primary">rpmF</name>
    <name type="ordered locus">A1G_06575</name>
</gene>
<feature type="chain" id="PRO_1000005076" description="Large ribosomal subunit protein bL32">
    <location>
        <begin position="1"/>
        <end position="66"/>
    </location>
</feature>
<accession>A8GTP3</accession>
<comment type="similarity">
    <text evidence="1">Belongs to the bacterial ribosomal protein bL32 family.</text>
</comment>
<sequence length="66" mass="7488">MAVPKKKTSKSRRNMRRSHLALGKVNVIVDSQTGEYKLPHHVSLVDGTYNNRLVVTKKIKTEEEVA</sequence>
<name>RL32_RICRS</name>
<proteinExistence type="inferred from homology"/>
<reference key="1">
    <citation type="submission" date="2007-09" db="EMBL/GenBank/DDBJ databases">
        <title>Complete genome sequence of Rickettsia rickettsii.</title>
        <authorList>
            <person name="Madan A."/>
            <person name="Fahey J."/>
            <person name="Helton E."/>
            <person name="Ketteman M."/>
            <person name="Madan A."/>
            <person name="Rodrigues S."/>
            <person name="Sanchez A."/>
            <person name="Dasch G."/>
            <person name="Eremeeva M."/>
        </authorList>
    </citation>
    <scope>NUCLEOTIDE SEQUENCE [LARGE SCALE GENOMIC DNA]</scope>
    <source>
        <strain>Sheila Smith</strain>
    </source>
</reference>
<keyword id="KW-0687">Ribonucleoprotein</keyword>
<keyword id="KW-0689">Ribosomal protein</keyword>
<evidence type="ECO:0000255" key="1">
    <source>
        <dbReference type="HAMAP-Rule" id="MF_00340"/>
    </source>
</evidence>
<evidence type="ECO:0000305" key="2"/>
<organism>
    <name type="scientific">Rickettsia rickettsii (strain Sheila Smith)</name>
    <dbReference type="NCBI Taxonomy" id="392021"/>
    <lineage>
        <taxon>Bacteria</taxon>
        <taxon>Pseudomonadati</taxon>
        <taxon>Pseudomonadota</taxon>
        <taxon>Alphaproteobacteria</taxon>
        <taxon>Rickettsiales</taxon>
        <taxon>Rickettsiaceae</taxon>
        <taxon>Rickettsieae</taxon>
        <taxon>Rickettsia</taxon>
        <taxon>spotted fever group</taxon>
    </lineage>
</organism>
<dbReference type="EMBL" id="CP000848">
    <property type="protein sequence ID" value="ABV76768.1"/>
    <property type="molecule type" value="Genomic_DNA"/>
</dbReference>
<dbReference type="RefSeq" id="WP_004997395.1">
    <property type="nucleotide sequence ID" value="NC_009882.1"/>
</dbReference>
<dbReference type="SMR" id="A8GTP3"/>
<dbReference type="GeneID" id="79937816"/>
<dbReference type="GeneID" id="95361611"/>
<dbReference type="KEGG" id="rri:A1G_06575"/>
<dbReference type="HOGENOM" id="CLU_129084_2_0_5"/>
<dbReference type="Proteomes" id="UP000006832">
    <property type="component" value="Chromosome"/>
</dbReference>
<dbReference type="GO" id="GO:0015934">
    <property type="term" value="C:large ribosomal subunit"/>
    <property type="evidence" value="ECO:0007669"/>
    <property type="project" value="InterPro"/>
</dbReference>
<dbReference type="GO" id="GO:0003735">
    <property type="term" value="F:structural constituent of ribosome"/>
    <property type="evidence" value="ECO:0007669"/>
    <property type="project" value="InterPro"/>
</dbReference>
<dbReference type="GO" id="GO:0006412">
    <property type="term" value="P:translation"/>
    <property type="evidence" value="ECO:0007669"/>
    <property type="project" value="UniProtKB-UniRule"/>
</dbReference>
<dbReference type="Gene3D" id="1.20.5.640">
    <property type="entry name" value="Single helix bin"/>
    <property type="match status" value="1"/>
</dbReference>
<dbReference type="HAMAP" id="MF_00340">
    <property type="entry name" value="Ribosomal_bL32"/>
    <property type="match status" value="1"/>
</dbReference>
<dbReference type="InterPro" id="IPR002677">
    <property type="entry name" value="Ribosomal_bL32"/>
</dbReference>
<dbReference type="InterPro" id="IPR044957">
    <property type="entry name" value="Ribosomal_bL32_bact"/>
</dbReference>
<dbReference type="InterPro" id="IPR011332">
    <property type="entry name" value="Ribosomal_zn-bd"/>
</dbReference>
<dbReference type="NCBIfam" id="TIGR01031">
    <property type="entry name" value="rpmF_bact"/>
    <property type="match status" value="1"/>
</dbReference>
<dbReference type="PANTHER" id="PTHR35534">
    <property type="entry name" value="50S RIBOSOMAL PROTEIN L32"/>
    <property type="match status" value="1"/>
</dbReference>
<dbReference type="PANTHER" id="PTHR35534:SF1">
    <property type="entry name" value="LARGE RIBOSOMAL SUBUNIT PROTEIN BL32"/>
    <property type="match status" value="1"/>
</dbReference>
<dbReference type="Pfam" id="PF01783">
    <property type="entry name" value="Ribosomal_L32p"/>
    <property type="match status" value="1"/>
</dbReference>
<dbReference type="SUPFAM" id="SSF57829">
    <property type="entry name" value="Zn-binding ribosomal proteins"/>
    <property type="match status" value="1"/>
</dbReference>
<protein>
    <recommendedName>
        <fullName evidence="1">Large ribosomal subunit protein bL32</fullName>
    </recommendedName>
    <alternativeName>
        <fullName evidence="2">50S ribosomal protein L32</fullName>
    </alternativeName>
</protein>